<evidence type="ECO:0000255" key="1">
    <source>
        <dbReference type="HAMAP-Rule" id="MF_00921"/>
    </source>
</evidence>
<keyword id="KW-0418">Kinase</keyword>
<keyword id="KW-0547">Nucleotide-binding</keyword>
<keyword id="KW-0723">Serine/threonine-protein kinase</keyword>
<keyword id="KW-0808">Transferase</keyword>
<sequence length="268" mass="30168">MLTILAVSDSIGETANQVAVAAASQFTEKVDVKRIPYVKSLEDVEDVMNIANECESVIIVSTIITVNVREHLTQKAMEKNISVMNVLGPIINVASTILNTHPTYNPGAMRQTDEVYFKRIEAMEFAMQYDDSKDYRGLKNADVVLIGLSRTSKTPLCMYLANKGVKAINIPLMPEVGVPDEIYEIDRKKVFGLTINPLRLIEIRKRRLDKFHRITSDIEYAGDARVLEELDFADKIMRKIGCKTIDVTERAIEDTALIILEKIGYNNK</sequence>
<feature type="chain" id="PRO_1000084465" description="Putative pyruvate, phosphate dikinase regulatory protein">
    <location>
        <begin position="1"/>
        <end position="268"/>
    </location>
</feature>
<feature type="binding site" evidence="1">
    <location>
        <begin position="147"/>
        <end position="154"/>
    </location>
    <ligand>
        <name>ADP</name>
        <dbReference type="ChEBI" id="CHEBI:456216"/>
    </ligand>
</feature>
<protein>
    <recommendedName>
        <fullName evidence="1">Putative pyruvate, phosphate dikinase regulatory protein</fullName>
        <shortName evidence="1">PPDK regulatory protein</shortName>
        <ecNumber evidence="1">2.7.11.32</ecNumber>
        <ecNumber evidence="1">2.7.4.27</ecNumber>
    </recommendedName>
</protein>
<proteinExistence type="inferred from homology"/>
<dbReference type="EC" id="2.7.11.32" evidence="1"/>
<dbReference type="EC" id="2.7.4.27" evidence="1"/>
<dbReference type="EMBL" id="CP000721">
    <property type="protein sequence ID" value="ABR37007.1"/>
    <property type="molecule type" value="Genomic_DNA"/>
</dbReference>
<dbReference type="RefSeq" id="WP_012061051.1">
    <property type="nucleotide sequence ID" value="NC_009617.1"/>
</dbReference>
<dbReference type="SMR" id="A6M327"/>
<dbReference type="KEGG" id="cbe:Cbei_4901"/>
<dbReference type="eggNOG" id="COG1806">
    <property type="taxonomic scope" value="Bacteria"/>
</dbReference>
<dbReference type="HOGENOM" id="CLU_046206_2_1_9"/>
<dbReference type="Proteomes" id="UP000000565">
    <property type="component" value="Chromosome"/>
</dbReference>
<dbReference type="GO" id="GO:0043531">
    <property type="term" value="F:ADP binding"/>
    <property type="evidence" value="ECO:0007669"/>
    <property type="project" value="UniProtKB-UniRule"/>
</dbReference>
<dbReference type="GO" id="GO:0005524">
    <property type="term" value="F:ATP binding"/>
    <property type="evidence" value="ECO:0007669"/>
    <property type="project" value="InterPro"/>
</dbReference>
<dbReference type="GO" id="GO:0016776">
    <property type="term" value="F:phosphotransferase activity, phosphate group as acceptor"/>
    <property type="evidence" value="ECO:0007669"/>
    <property type="project" value="UniProtKB-UniRule"/>
</dbReference>
<dbReference type="GO" id="GO:0004674">
    <property type="term" value="F:protein serine/threonine kinase activity"/>
    <property type="evidence" value="ECO:0007669"/>
    <property type="project" value="UniProtKB-UniRule"/>
</dbReference>
<dbReference type="HAMAP" id="MF_00921">
    <property type="entry name" value="PDRP"/>
    <property type="match status" value="1"/>
</dbReference>
<dbReference type="InterPro" id="IPR005177">
    <property type="entry name" value="Kinase-pyrophosphorylase"/>
</dbReference>
<dbReference type="InterPro" id="IPR026565">
    <property type="entry name" value="PPDK_reg"/>
</dbReference>
<dbReference type="NCBIfam" id="NF003742">
    <property type="entry name" value="PRK05339.1"/>
    <property type="match status" value="1"/>
</dbReference>
<dbReference type="PANTHER" id="PTHR31756">
    <property type="entry name" value="PYRUVATE, PHOSPHATE DIKINASE REGULATORY PROTEIN 1, CHLOROPLASTIC"/>
    <property type="match status" value="1"/>
</dbReference>
<dbReference type="PANTHER" id="PTHR31756:SF3">
    <property type="entry name" value="PYRUVATE, PHOSPHATE DIKINASE REGULATORY PROTEIN 1, CHLOROPLASTIC"/>
    <property type="match status" value="1"/>
</dbReference>
<dbReference type="Pfam" id="PF03618">
    <property type="entry name" value="Kinase-PPPase"/>
    <property type="match status" value="1"/>
</dbReference>
<organism>
    <name type="scientific">Clostridium beijerinckii (strain ATCC 51743 / NCIMB 8052)</name>
    <name type="common">Clostridium acetobutylicum</name>
    <dbReference type="NCBI Taxonomy" id="290402"/>
    <lineage>
        <taxon>Bacteria</taxon>
        <taxon>Bacillati</taxon>
        <taxon>Bacillota</taxon>
        <taxon>Clostridia</taxon>
        <taxon>Eubacteriales</taxon>
        <taxon>Clostridiaceae</taxon>
        <taxon>Clostridium</taxon>
    </lineage>
</organism>
<accession>A6M327</accession>
<reference key="1">
    <citation type="submission" date="2007-06" db="EMBL/GenBank/DDBJ databases">
        <title>Complete sequence of Clostridium beijerinckii NCIMB 8052.</title>
        <authorList>
            <consortium name="US DOE Joint Genome Institute"/>
            <person name="Copeland A."/>
            <person name="Lucas S."/>
            <person name="Lapidus A."/>
            <person name="Barry K."/>
            <person name="Detter J.C."/>
            <person name="Glavina del Rio T."/>
            <person name="Hammon N."/>
            <person name="Israni S."/>
            <person name="Dalin E."/>
            <person name="Tice H."/>
            <person name="Pitluck S."/>
            <person name="Sims D."/>
            <person name="Brettin T."/>
            <person name="Bruce D."/>
            <person name="Tapia R."/>
            <person name="Brainard J."/>
            <person name="Schmutz J."/>
            <person name="Larimer F."/>
            <person name="Land M."/>
            <person name="Hauser L."/>
            <person name="Kyrpides N."/>
            <person name="Mikhailova N."/>
            <person name="Bennet G."/>
            <person name="Cann I."/>
            <person name="Chen J.-S."/>
            <person name="Contreras A.L."/>
            <person name="Jones D."/>
            <person name="Kashket E."/>
            <person name="Mitchell W."/>
            <person name="Stoddard S."/>
            <person name="Schwarz W."/>
            <person name="Qureshi N."/>
            <person name="Young M."/>
            <person name="Shi Z."/>
            <person name="Ezeji T."/>
            <person name="White B."/>
            <person name="Blaschek H."/>
            <person name="Richardson P."/>
        </authorList>
    </citation>
    <scope>NUCLEOTIDE SEQUENCE [LARGE SCALE GENOMIC DNA]</scope>
    <source>
        <strain>ATCC 51743 / NCIMB 8052</strain>
    </source>
</reference>
<gene>
    <name type="ordered locus">Cbei_4901</name>
</gene>
<name>PDRP_CLOB8</name>
<comment type="function">
    <text evidence="1">Bifunctional serine/threonine kinase and phosphorylase involved in the regulation of the pyruvate, phosphate dikinase (PPDK) by catalyzing its phosphorylation/dephosphorylation.</text>
</comment>
<comment type="catalytic activity">
    <reaction evidence="1">
        <text>N(tele)-phospho-L-histidyl/L-threonyl-[pyruvate, phosphate dikinase] + ADP = N(tele)-phospho-L-histidyl/O-phospho-L-threonyl-[pyruvate, phosphate dikinase] + AMP + H(+)</text>
        <dbReference type="Rhea" id="RHEA:43692"/>
        <dbReference type="Rhea" id="RHEA-COMP:10650"/>
        <dbReference type="Rhea" id="RHEA-COMP:10651"/>
        <dbReference type="ChEBI" id="CHEBI:15378"/>
        <dbReference type="ChEBI" id="CHEBI:30013"/>
        <dbReference type="ChEBI" id="CHEBI:61977"/>
        <dbReference type="ChEBI" id="CHEBI:83586"/>
        <dbReference type="ChEBI" id="CHEBI:456215"/>
        <dbReference type="ChEBI" id="CHEBI:456216"/>
        <dbReference type="EC" id="2.7.11.32"/>
    </reaction>
</comment>
<comment type="catalytic activity">
    <reaction evidence="1">
        <text>N(tele)-phospho-L-histidyl/O-phospho-L-threonyl-[pyruvate, phosphate dikinase] + phosphate + H(+) = N(tele)-phospho-L-histidyl/L-threonyl-[pyruvate, phosphate dikinase] + diphosphate</text>
        <dbReference type="Rhea" id="RHEA:43696"/>
        <dbReference type="Rhea" id="RHEA-COMP:10650"/>
        <dbReference type="Rhea" id="RHEA-COMP:10651"/>
        <dbReference type="ChEBI" id="CHEBI:15378"/>
        <dbReference type="ChEBI" id="CHEBI:30013"/>
        <dbReference type="ChEBI" id="CHEBI:33019"/>
        <dbReference type="ChEBI" id="CHEBI:43474"/>
        <dbReference type="ChEBI" id="CHEBI:61977"/>
        <dbReference type="ChEBI" id="CHEBI:83586"/>
        <dbReference type="EC" id="2.7.4.27"/>
    </reaction>
</comment>
<comment type="similarity">
    <text evidence="1">Belongs to the pyruvate, phosphate/water dikinase regulatory protein family. PDRP subfamily.</text>
</comment>